<protein>
    <recommendedName>
        <fullName evidence="1">Phosphopantetheine adenylyltransferase</fullName>
        <ecNumber evidence="1">2.7.7.3</ecNumber>
    </recommendedName>
    <alternativeName>
        <fullName evidence="1">Dephospho-CoA pyrophosphorylase</fullName>
    </alternativeName>
    <alternativeName>
        <fullName evidence="1">Pantetheine-phosphate adenylyltransferase</fullName>
        <shortName evidence="1">PPAT</shortName>
    </alternativeName>
</protein>
<reference key="1">
    <citation type="journal article" date="2008" name="J. Bacteriol.">
        <title>The genome of Heliobacterium modesticaldum, a phototrophic representative of the Firmicutes containing the simplest photosynthetic apparatus.</title>
        <authorList>
            <person name="Sattley W.M."/>
            <person name="Madigan M.T."/>
            <person name="Swingley W.D."/>
            <person name="Cheung P.C."/>
            <person name="Clocksin K.M."/>
            <person name="Conrad A.L."/>
            <person name="Dejesa L.C."/>
            <person name="Honchak B.M."/>
            <person name="Jung D.O."/>
            <person name="Karbach L.E."/>
            <person name="Kurdoglu A."/>
            <person name="Lahiri S."/>
            <person name="Mastrian S.D."/>
            <person name="Page L.E."/>
            <person name="Taylor H.L."/>
            <person name="Wang Z.T."/>
            <person name="Raymond J."/>
            <person name="Chen M."/>
            <person name="Blankenship R.E."/>
            <person name="Touchman J.W."/>
        </authorList>
    </citation>
    <scope>NUCLEOTIDE SEQUENCE [LARGE SCALE GENOMIC DNA]</scope>
    <source>
        <strain>ATCC 51547 / Ice1</strain>
    </source>
</reference>
<accession>B0TGU9</accession>
<name>COAD_HELMI</name>
<keyword id="KW-0067">ATP-binding</keyword>
<keyword id="KW-0173">Coenzyme A biosynthesis</keyword>
<keyword id="KW-0963">Cytoplasm</keyword>
<keyword id="KW-0460">Magnesium</keyword>
<keyword id="KW-0547">Nucleotide-binding</keyword>
<keyword id="KW-0548">Nucleotidyltransferase</keyword>
<keyword id="KW-1185">Reference proteome</keyword>
<keyword id="KW-0808">Transferase</keyword>
<proteinExistence type="inferred from homology"/>
<evidence type="ECO:0000255" key="1">
    <source>
        <dbReference type="HAMAP-Rule" id="MF_00151"/>
    </source>
</evidence>
<gene>
    <name evidence="1" type="primary">coaD</name>
    <name type="ordered locus">Helmi_20850</name>
    <name type="ORF">HM1_2154</name>
</gene>
<organism>
    <name type="scientific">Heliobacterium modesticaldum (strain ATCC 51547 / Ice1)</name>
    <dbReference type="NCBI Taxonomy" id="498761"/>
    <lineage>
        <taxon>Bacteria</taxon>
        <taxon>Bacillati</taxon>
        <taxon>Bacillota</taxon>
        <taxon>Clostridia</taxon>
        <taxon>Eubacteriales</taxon>
        <taxon>Heliobacteriaceae</taxon>
        <taxon>Heliomicrobium</taxon>
    </lineage>
</organism>
<comment type="function">
    <text evidence="1">Reversibly transfers an adenylyl group from ATP to 4'-phosphopantetheine, yielding dephospho-CoA (dPCoA) and pyrophosphate.</text>
</comment>
<comment type="catalytic activity">
    <reaction evidence="1">
        <text>(R)-4'-phosphopantetheine + ATP + H(+) = 3'-dephospho-CoA + diphosphate</text>
        <dbReference type="Rhea" id="RHEA:19801"/>
        <dbReference type="ChEBI" id="CHEBI:15378"/>
        <dbReference type="ChEBI" id="CHEBI:30616"/>
        <dbReference type="ChEBI" id="CHEBI:33019"/>
        <dbReference type="ChEBI" id="CHEBI:57328"/>
        <dbReference type="ChEBI" id="CHEBI:61723"/>
        <dbReference type="EC" id="2.7.7.3"/>
    </reaction>
</comment>
<comment type="cofactor">
    <cofactor evidence="1">
        <name>Mg(2+)</name>
        <dbReference type="ChEBI" id="CHEBI:18420"/>
    </cofactor>
</comment>
<comment type="pathway">
    <text evidence="1">Cofactor biosynthesis; coenzyme A biosynthesis; CoA from (R)-pantothenate: step 4/5.</text>
</comment>
<comment type="subunit">
    <text evidence="1">Homohexamer.</text>
</comment>
<comment type="subcellular location">
    <subcellularLocation>
        <location evidence="1">Cytoplasm</location>
    </subcellularLocation>
</comment>
<comment type="similarity">
    <text evidence="1">Belongs to the bacterial CoaD family.</text>
</comment>
<dbReference type="EC" id="2.7.7.3" evidence="1"/>
<dbReference type="EMBL" id="CP000930">
    <property type="protein sequence ID" value="ABZ84710.1"/>
    <property type="molecule type" value="Genomic_DNA"/>
</dbReference>
<dbReference type="RefSeq" id="WP_012283210.1">
    <property type="nucleotide sequence ID" value="NC_010337.2"/>
</dbReference>
<dbReference type="SMR" id="B0TGU9"/>
<dbReference type="STRING" id="498761.HM1_2154"/>
<dbReference type="KEGG" id="hmo:HM1_2154"/>
<dbReference type="eggNOG" id="COG0669">
    <property type="taxonomic scope" value="Bacteria"/>
</dbReference>
<dbReference type="HOGENOM" id="CLU_100149_0_1_9"/>
<dbReference type="OrthoDB" id="9806661at2"/>
<dbReference type="UniPathway" id="UPA00241">
    <property type="reaction ID" value="UER00355"/>
</dbReference>
<dbReference type="Proteomes" id="UP000008550">
    <property type="component" value="Chromosome"/>
</dbReference>
<dbReference type="GO" id="GO:0005737">
    <property type="term" value="C:cytoplasm"/>
    <property type="evidence" value="ECO:0007669"/>
    <property type="project" value="UniProtKB-SubCell"/>
</dbReference>
<dbReference type="GO" id="GO:0005524">
    <property type="term" value="F:ATP binding"/>
    <property type="evidence" value="ECO:0007669"/>
    <property type="project" value="UniProtKB-KW"/>
</dbReference>
<dbReference type="GO" id="GO:0004595">
    <property type="term" value="F:pantetheine-phosphate adenylyltransferase activity"/>
    <property type="evidence" value="ECO:0007669"/>
    <property type="project" value="UniProtKB-UniRule"/>
</dbReference>
<dbReference type="GO" id="GO:0015937">
    <property type="term" value="P:coenzyme A biosynthetic process"/>
    <property type="evidence" value="ECO:0007669"/>
    <property type="project" value="UniProtKB-UniRule"/>
</dbReference>
<dbReference type="CDD" id="cd02163">
    <property type="entry name" value="PPAT"/>
    <property type="match status" value="1"/>
</dbReference>
<dbReference type="FunFam" id="3.40.50.620:FF:000012">
    <property type="entry name" value="Phosphopantetheine adenylyltransferase"/>
    <property type="match status" value="1"/>
</dbReference>
<dbReference type="Gene3D" id="3.40.50.620">
    <property type="entry name" value="HUPs"/>
    <property type="match status" value="1"/>
</dbReference>
<dbReference type="HAMAP" id="MF_00151">
    <property type="entry name" value="PPAT_bact"/>
    <property type="match status" value="1"/>
</dbReference>
<dbReference type="InterPro" id="IPR004821">
    <property type="entry name" value="Cyt_trans-like"/>
</dbReference>
<dbReference type="InterPro" id="IPR001980">
    <property type="entry name" value="PPAT"/>
</dbReference>
<dbReference type="InterPro" id="IPR014729">
    <property type="entry name" value="Rossmann-like_a/b/a_fold"/>
</dbReference>
<dbReference type="NCBIfam" id="TIGR01510">
    <property type="entry name" value="coaD_prev_kdtB"/>
    <property type="match status" value="1"/>
</dbReference>
<dbReference type="NCBIfam" id="TIGR00125">
    <property type="entry name" value="cyt_tran_rel"/>
    <property type="match status" value="1"/>
</dbReference>
<dbReference type="PANTHER" id="PTHR21342">
    <property type="entry name" value="PHOSPHOPANTETHEINE ADENYLYLTRANSFERASE"/>
    <property type="match status" value="1"/>
</dbReference>
<dbReference type="PANTHER" id="PTHR21342:SF1">
    <property type="entry name" value="PHOSPHOPANTETHEINE ADENYLYLTRANSFERASE"/>
    <property type="match status" value="1"/>
</dbReference>
<dbReference type="Pfam" id="PF01467">
    <property type="entry name" value="CTP_transf_like"/>
    <property type="match status" value="1"/>
</dbReference>
<dbReference type="PRINTS" id="PR01020">
    <property type="entry name" value="LPSBIOSNTHSS"/>
</dbReference>
<dbReference type="SUPFAM" id="SSF52374">
    <property type="entry name" value="Nucleotidylyl transferase"/>
    <property type="match status" value="1"/>
</dbReference>
<feature type="chain" id="PRO_1000096799" description="Phosphopantetheine adenylyltransferase">
    <location>
        <begin position="1"/>
        <end position="168"/>
    </location>
</feature>
<feature type="binding site" evidence="1">
    <location>
        <begin position="9"/>
        <end position="10"/>
    </location>
    <ligand>
        <name>ATP</name>
        <dbReference type="ChEBI" id="CHEBI:30616"/>
    </ligand>
</feature>
<feature type="binding site" evidence="1">
    <location>
        <position position="9"/>
    </location>
    <ligand>
        <name>substrate</name>
    </ligand>
</feature>
<feature type="binding site" evidence="1">
    <location>
        <position position="17"/>
    </location>
    <ligand>
        <name>ATP</name>
        <dbReference type="ChEBI" id="CHEBI:30616"/>
    </ligand>
</feature>
<feature type="binding site" evidence="1">
    <location>
        <position position="41"/>
    </location>
    <ligand>
        <name>substrate</name>
    </ligand>
</feature>
<feature type="binding site" evidence="1">
    <location>
        <position position="73"/>
    </location>
    <ligand>
        <name>substrate</name>
    </ligand>
</feature>
<feature type="binding site" evidence="1">
    <location>
        <position position="87"/>
    </location>
    <ligand>
        <name>substrate</name>
    </ligand>
</feature>
<feature type="binding site" evidence="1">
    <location>
        <begin position="88"/>
        <end position="90"/>
    </location>
    <ligand>
        <name>ATP</name>
        <dbReference type="ChEBI" id="CHEBI:30616"/>
    </ligand>
</feature>
<feature type="binding site" evidence="1">
    <location>
        <position position="98"/>
    </location>
    <ligand>
        <name>ATP</name>
        <dbReference type="ChEBI" id="CHEBI:30616"/>
    </ligand>
</feature>
<feature type="binding site" evidence="1">
    <location>
        <begin position="123"/>
        <end position="129"/>
    </location>
    <ligand>
        <name>ATP</name>
        <dbReference type="ChEBI" id="CHEBI:30616"/>
    </ligand>
</feature>
<feature type="site" description="Transition state stabilizer" evidence="1">
    <location>
        <position position="17"/>
    </location>
</feature>
<sequence>MTVAVYPGSFDPITKGHMDIVERAAQIFHEVIVAVVINPNKKPLFTMDERVEMIRMAVSHISNVRVESFSGLLVDFTRKQGARAIVRGLRAVSDFEVEFQMALMNKRLYPEVETVFMATHTDYAFLSSSMVKEVASFGGDVSDYLPPAVLARMAEKYGDTVRGKAPVR</sequence>